<evidence type="ECO:0000255" key="1">
    <source>
        <dbReference type="HAMAP-Rule" id="MF_00373"/>
    </source>
</evidence>
<evidence type="ECO:0000305" key="2"/>
<sequence length="62" mass="6884">MAKVCYFTGRKTVSGNNRSHAMNQTKRAVKPNLQKVTVLIDGKPKKVWASARALKSGKVERV</sequence>
<name>RL28_STRPS</name>
<protein>
    <recommendedName>
        <fullName evidence="1">Large ribosomal subunit protein bL28</fullName>
    </recommendedName>
    <alternativeName>
        <fullName evidence="2">50S ribosomal protein L28</fullName>
    </alternativeName>
</protein>
<keyword id="KW-0687">Ribonucleoprotein</keyword>
<keyword id="KW-0689">Ribosomal protein</keyword>
<comment type="similarity">
    <text evidence="1">Belongs to the bacterial ribosomal protein bL28 family.</text>
</comment>
<reference key="1">
    <citation type="journal article" date="2009" name="BMC Genomics">
        <title>Genome evolution driven by host adaptations results in a more virulent and antimicrobial-resistant Streptococcus pneumoniae serotype 14.</title>
        <authorList>
            <person name="Ding F."/>
            <person name="Tang P."/>
            <person name="Hsu M.-H."/>
            <person name="Cui P."/>
            <person name="Hu S."/>
            <person name="Yu J."/>
            <person name="Chiu C.-H."/>
        </authorList>
    </citation>
    <scope>NUCLEOTIDE SEQUENCE [LARGE SCALE GENOMIC DNA]</scope>
    <source>
        <strain>CGSP14</strain>
    </source>
</reference>
<dbReference type="EMBL" id="CP001033">
    <property type="protein sequence ID" value="ACB89688.1"/>
    <property type="molecule type" value="Genomic_DNA"/>
</dbReference>
<dbReference type="RefSeq" id="WP_001140948.1">
    <property type="nucleotide sequence ID" value="NC_010582.1"/>
</dbReference>
<dbReference type="SMR" id="B2ILY3"/>
<dbReference type="GeneID" id="93921138"/>
<dbReference type="KEGG" id="spw:SPCG_0436"/>
<dbReference type="HOGENOM" id="CLU_064548_7_1_9"/>
<dbReference type="GO" id="GO:1990904">
    <property type="term" value="C:ribonucleoprotein complex"/>
    <property type="evidence" value="ECO:0007669"/>
    <property type="project" value="UniProtKB-KW"/>
</dbReference>
<dbReference type="GO" id="GO:0005840">
    <property type="term" value="C:ribosome"/>
    <property type="evidence" value="ECO:0007669"/>
    <property type="project" value="UniProtKB-KW"/>
</dbReference>
<dbReference type="GO" id="GO:0003735">
    <property type="term" value="F:structural constituent of ribosome"/>
    <property type="evidence" value="ECO:0007669"/>
    <property type="project" value="InterPro"/>
</dbReference>
<dbReference type="GO" id="GO:0006412">
    <property type="term" value="P:translation"/>
    <property type="evidence" value="ECO:0007669"/>
    <property type="project" value="UniProtKB-UniRule"/>
</dbReference>
<dbReference type="Gene3D" id="2.30.170.40">
    <property type="entry name" value="Ribosomal protein L28/L24"/>
    <property type="match status" value="1"/>
</dbReference>
<dbReference type="HAMAP" id="MF_00373">
    <property type="entry name" value="Ribosomal_bL28"/>
    <property type="match status" value="1"/>
</dbReference>
<dbReference type="InterPro" id="IPR050096">
    <property type="entry name" value="Bacterial_rp_bL28"/>
</dbReference>
<dbReference type="InterPro" id="IPR026569">
    <property type="entry name" value="Ribosomal_bL28"/>
</dbReference>
<dbReference type="InterPro" id="IPR034704">
    <property type="entry name" value="Ribosomal_bL28/bL31-like_sf"/>
</dbReference>
<dbReference type="InterPro" id="IPR001383">
    <property type="entry name" value="Ribosomal_bL28_bact-type"/>
</dbReference>
<dbReference type="InterPro" id="IPR037147">
    <property type="entry name" value="Ribosomal_bL28_sf"/>
</dbReference>
<dbReference type="NCBIfam" id="TIGR00009">
    <property type="entry name" value="L28"/>
    <property type="match status" value="1"/>
</dbReference>
<dbReference type="PANTHER" id="PTHR39080">
    <property type="entry name" value="50S RIBOSOMAL PROTEIN L28"/>
    <property type="match status" value="1"/>
</dbReference>
<dbReference type="PANTHER" id="PTHR39080:SF1">
    <property type="entry name" value="LARGE RIBOSOMAL SUBUNIT PROTEIN BL28A"/>
    <property type="match status" value="1"/>
</dbReference>
<dbReference type="Pfam" id="PF00830">
    <property type="entry name" value="Ribosomal_L28"/>
    <property type="match status" value="1"/>
</dbReference>
<dbReference type="SUPFAM" id="SSF143800">
    <property type="entry name" value="L28p-like"/>
    <property type="match status" value="1"/>
</dbReference>
<proteinExistence type="inferred from homology"/>
<feature type="chain" id="PRO_1000121696" description="Large ribosomal subunit protein bL28">
    <location>
        <begin position="1"/>
        <end position="62"/>
    </location>
</feature>
<accession>B2ILY3</accession>
<gene>
    <name evidence="1" type="primary">rpmB</name>
    <name type="ordered locus">SPCG_0436</name>
</gene>
<organism>
    <name type="scientific">Streptococcus pneumoniae (strain CGSP14)</name>
    <dbReference type="NCBI Taxonomy" id="516950"/>
    <lineage>
        <taxon>Bacteria</taxon>
        <taxon>Bacillati</taxon>
        <taxon>Bacillota</taxon>
        <taxon>Bacilli</taxon>
        <taxon>Lactobacillales</taxon>
        <taxon>Streptococcaceae</taxon>
        <taxon>Streptococcus</taxon>
    </lineage>
</organism>